<sequence length="292" mass="31830">MSEIRLYVTTTESKAEEILDLLSAVFGEEDFAIGTTEIDEKEDIWEASIYMMAEDEAEVHSRVEDALKASFPNARLEREVIPDVDWVVKSLEGLKPVRAGRFLVHGSHDRDKVRPGDIAIEIDAGQAFGTGHHGTTAGCLEAIDAVVRSRPVRNALDLGTGSGVLAIAVRKLKNIPVLATDIDPIATRVAAENVRRNGIASGIVTRTAPGFHSTAFSEHGPFDLIIANILARPLIRMAPKLATHLAPGGSVILSGILATQRWKVIAAYSGARLRHVRTIWRNGWVTIHFDRP</sequence>
<keyword id="KW-0963">Cytoplasm</keyword>
<keyword id="KW-0489">Methyltransferase</keyword>
<keyword id="KW-1185">Reference proteome</keyword>
<keyword id="KW-0949">S-adenosyl-L-methionine</keyword>
<keyword id="KW-0808">Transferase</keyword>
<evidence type="ECO:0000255" key="1">
    <source>
        <dbReference type="HAMAP-Rule" id="MF_00735"/>
    </source>
</evidence>
<accession>B5ZWH3</accession>
<dbReference type="EC" id="2.1.1.-" evidence="1"/>
<dbReference type="EMBL" id="CP001191">
    <property type="protein sequence ID" value="ACI55844.1"/>
    <property type="molecule type" value="Genomic_DNA"/>
</dbReference>
<dbReference type="RefSeq" id="WP_012558356.1">
    <property type="nucleotide sequence ID" value="NC_011369.1"/>
</dbReference>
<dbReference type="SMR" id="B5ZWH3"/>
<dbReference type="STRING" id="395492.Rleg2_2573"/>
<dbReference type="KEGG" id="rlt:Rleg2_2573"/>
<dbReference type="eggNOG" id="COG2264">
    <property type="taxonomic scope" value="Bacteria"/>
</dbReference>
<dbReference type="HOGENOM" id="CLU_049382_3_0_5"/>
<dbReference type="Proteomes" id="UP000008330">
    <property type="component" value="Chromosome"/>
</dbReference>
<dbReference type="GO" id="GO:0005737">
    <property type="term" value="C:cytoplasm"/>
    <property type="evidence" value="ECO:0007669"/>
    <property type="project" value="UniProtKB-SubCell"/>
</dbReference>
<dbReference type="GO" id="GO:0016279">
    <property type="term" value="F:protein-lysine N-methyltransferase activity"/>
    <property type="evidence" value="ECO:0007669"/>
    <property type="project" value="RHEA"/>
</dbReference>
<dbReference type="GO" id="GO:0032259">
    <property type="term" value="P:methylation"/>
    <property type="evidence" value="ECO:0007669"/>
    <property type="project" value="UniProtKB-KW"/>
</dbReference>
<dbReference type="CDD" id="cd02440">
    <property type="entry name" value="AdoMet_MTases"/>
    <property type="match status" value="1"/>
</dbReference>
<dbReference type="Gene3D" id="3.40.50.150">
    <property type="entry name" value="Vaccinia Virus protein VP39"/>
    <property type="match status" value="1"/>
</dbReference>
<dbReference type="HAMAP" id="MF_00735">
    <property type="entry name" value="Methyltr_PrmA"/>
    <property type="match status" value="1"/>
</dbReference>
<dbReference type="InterPro" id="IPR050078">
    <property type="entry name" value="Ribosomal_L11_MeTrfase_PrmA"/>
</dbReference>
<dbReference type="InterPro" id="IPR004498">
    <property type="entry name" value="Ribosomal_PrmA_MeTrfase"/>
</dbReference>
<dbReference type="InterPro" id="IPR029063">
    <property type="entry name" value="SAM-dependent_MTases_sf"/>
</dbReference>
<dbReference type="NCBIfam" id="NF001784">
    <property type="entry name" value="PRK00517.2-1"/>
    <property type="match status" value="1"/>
</dbReference>
<dbReference type="PANTHER" id="PTHR43648">
    <property type="entry name" value="ELECTRON TRANSFER FLAVOPROTEIN BETA SUBUNIT LYSINE METHYLTRANSFERASE"/>
    <property type="match status" value="1"/>
</dbReference>
<dbReference type="PANTHER" id="PTHR43648:SF1">
    <property type="entry name" value="ELECTRON TRANSFER FLAVOPROTEIN BETA SUBUNIT LYSINE METHYLTRANSFERASE"/>
    <property type="match status" value="1"/>
</dbReference>
<dbReference type="Pfam" id="PF06325">
    <property type="entry name" value="PrmA"/>
    <property type="match status" value="1"/>
</dbReference>
<dbReference type="PIRSF" id="PIRSF000401">
    <property type="entry name" value="RPL11_MTase"/>
    <property type="match status" value="1"/>
</dbReference>
<dbReference type="SUPFAM" id="SSF53335">
    <property type="entry name" value="S-adenosyl-L-methionine-dependent methyltransferases"/>
    <property type="match status" value="1"/>
</dbReference>
<gene>
    <name evidence="1" type="primary">prmA</name>
    <name type="ordered locus">Rleg2_2573</name>
</gene>
<protein>
    <recommendedName>
        <fullName evidence="1">Ribosomal protein L11 methyltransferase</fullName>
        <shortName evidence="1">L11 Mtase</shortName>
        <ecNumber evidence="1">2.1.1.-</ecNumber>
    </recommendedName>
</protein>
<name>PRMA_RHILW</name>
<proteinExistence type="inferred from homology"/>
<reference key="1">
    <citation type="journal article" date="2010" name="Stand. Genomic Sci.">
        <title>Complete genome sequence of Rhizobium leguminosarum bv trifolii strain WSM2304, an effective microsymbiont of the South American clover Trifolium polymorphum.</title>
        <authorList>
            <person name="Reeve W."/>
            <person name="O'Hara G."/>
            <person name="Chain P."/>
            <person name="Ardley J."/>
            <person name="Brau L."/>
            <person name="Nandesena K."/>
            <person name="Tiwari R."/>
            <person name="Malfatti S."/>
            <person name="Kiss H."/>
            <person name="Lapidus A."/>
            <person name="Copeland A."/>
            <person name="Nolan M."/>
            <person name="Land M."/>
            <person name="Ivanova N."/>
            <person name="Mavromatis K."/>
            <person name="Markowitz V."/>
            <person name="Kyrpides N."/>
            <person name="Melino V."/>
            <person name="Denton M."/>
            <person name="Yates R."/>
            <person name="Howieson J."/>
        </authorList>
    </citation>
    <scope>NUCLEOTIDE SEQUENCE [LARGE SCALE GENOMIC DNA]</scope>
    <source>
        <strain>WSM2304</strain>
    </source>
</reference>
<feature type="chain" id="PRO_1000192655" description="Ribosomal protein L11 methyltransferase">
    <location>
        <begin position="1"/>
        <end position="292"/>
    </location>
</feature>
<feature type="binding site" evidence="1">
    <location>
        <position position="136"/>
    </location>
    <ligand>
        <name>S-adenosyl-L-methionine</name>
        <dbReference type="ChEBI" id="CHEBI:59789"/>
    </ligand>
</feature>
<feature type="binding site" evidence="1">
    <location>
        <position position="159"/>
    </location>
    <ligand>
        <name>S-adenosyl-L-methionine</name>
        <dbReference type="ChEBI" id="CHEBI:59789"/>
    </ligand>
</feature>
<feature type="binding site" evidence="1">
    <location>
        <position position="181"/>
    </location>
    <ligand>
        <name>S-adenosyl-L-methionine</name>
        <dbReference type="ChEBI" id="CHEBI:59789"/>
    </ligand>
</feature>
<feature type="binding site" evidence="1">
    <location>
        <position position="228"/>
    </location>
    <ligand>
        <name>S-adenosyl-L-methionine</name>
        <dbReference type="ChEBI" id="CHEBI:59789"/>
    </ligand>
</feature>
<comment type="function">
    <text evidence="1">Methylates ribosomal protein L11.</text>
</comment>
<comment type="catalytic activity">
    <reaction evidence="1">
        <text>L-lysyl-[protein] + 3 S-adenosyl-L-methionine = N(6),N(6),N(6)-trimethyl-L-lysyl-[protein] + 3 S-adenosyl-L-homocysteine + 3 H(+)</text>
        <dbReference type="Rhea" id="RHEA:54192"/>
        <dbReference type="Rhea" id="RHEA-COMP:9752"/>
        <dbReference type="Rhea" id="RHEA-COMP:13826"/>
        <dbReference type="ChEBI" id="CHEBI:15378"/>
        <dbReference type="ChEBI" id="CHEBI:29969"/>
        <dbReference type="ChEBI" id="CHEBI:57856"/>
        <dbReference type="ChEBI" id="CHEBI:59789"/>
        <dbReference type="ChEBI" id="CHEBI:61961"/>
    </reaction>
</comment>
<comment type="subcellular location">
    <subcellularLocation>
        <location evidence="1">Cytoplasm</location>
    </subcellularLocation>
</comment>
<comment type="similarity">
    <text evidence="1">Belongs to the methyltransferase superfamily. PrmA family.</text>
</comment>
<organism>
    <name type="scientific">Rhizobium leguminosarum bv. trifolii (strain WSM2304)</name>
    <dbReference type="NCBI Taxonomy" id="395492"/>
    <lineage>
        <taxon>Bacteria</taxon>
        <taxon>Pseudomonadati</taxon>
        <taxon>Pseudomonadota</taxon>
        <taxon>Alphaproteobacteria</taxon>
        <taxon>Hyphomicrobiales</taxon>
        <taxon>Rhizobiaceae</taxon>
        <taxon>Rhizobium/Agrobacterium group</taxon>
        <taxon>Rhizobium</taxon>
    </lineage>
</organism>